<feature type="chain" id="PRO_0000247024" description="Cytosolic phospholipase A2 delta">
    <location>
        <begin position="1"/>
        <end position="825"/>
    </location>
</feature>
<feature type="domain" description="C2" evidence="3">
    <location>
        <begin position="14"/>
        <end position="133"/>
    </location>
</feature>
<feature type="domain" description="PLA2c" evidence="4">
    <location>
        <begin position="281"/>
        <end position="825"/>
    </location>
</feature>
<feature type="active site" description="Nucleophile" evidence="2">
    <location>
        <position position="370"/>
    </location>
</feature>
<feature type="active site" description="Proton acceptor" evidence="1">
    <location>
        <position position="654"/>
    </location>
</feature>
<feature type="binding site" evidence="3">
    <location>
        <position position="47"/>
    </location>
    <ligand>
        <name>Ca(2+)</name>
        <dbReference type="ChEBI" id="CHEBI:29108"/>
        <label>1</label>
    </ligand>
</feature>
<feature type="binding site" evidence="3">
    <location>
        <position position="47"/>
    </location>
    <ligand>
        <name>Ca(2+)</name>
        <dbReference type="ChEBI" id="CHEBI:29108"/>
        <label>2</label>
    </ligand>
</feature>
<feature type="binding site" evidence="3">
    <location>
        <position position="53"/>
    </location>
    <ligand>
        <name>Ca(2+)</name>
        <dbReference type="ChEBI" id="CHEBI:29108"/>
        <label>1</label>
    </ligand>
</feature>
<feature type="binding site" evidence="3">
    <location>
        <position position="103"/>
    </location>
    <ligand>
        <name>Ca(2+)</name>
        <dbReference type="ChEBI" id="CHEBI:29108"/>
        <label>1</label>
    </ligand>
</feature>
<feature type="binding site" evidence="3">
    <location>
        <position position="103"/>
    </location>
    <ligand>
        <name>Ca(2+)</name>
        <dbReference type="ChEBI" id="CHEBI:29108"/>
        <label>2</label>
    </ligand>
</feature>
<feature type="binding site" evidence="3">
    <location>
        <position position="105"/>
    </location>
    <ligand>
        <name>Ca(2+)</name>
        <dbReference type="ChEBI" id="CHEBI:29108"/>
        <label>1</label>
    </ligand>
</feature>
<feature type="binding site" evidence="3">
    <location>
        <position position="105"/>
    </location>
    <ligand>
        <name>Ca(2+)</name>
        <dbReference type="ChEBI" id="CHEBI:29108"/>
        <label>2</label>
    </ligand>
</feature>
<feature type="binding site" evidence="3">
    <location>
        <position position="111"/>
    </location>
    <ligand>
        <name>Ca(2+)</name>
        <dbReference type="ChEBI" id="CHEBI:29108"/>
        <label>2</label>
    </ligand>
</feature>
<feature type="binding site" evidence="2">
    <location>
        <begin position="339"/>
        <end position="340"/>
    </location>
    <ligand>
        <name>substrate</name>
    </ligand>
</feature>
<feature type="sequence conflict" description="In Ref. 2; BAE39570/BAE26807." evidence="7" ref="2">
    <original>R</original>
    <variation>G</variation>
    <location>
        <position position="222"/>
    </location>
</feature>
<feature type="sequence conflict" description="In Ref. 2; BAE39570/BAE26807." evidence="7" ref="2">
    <original>E</original>
    <variation>G</variation>
    <location>
        <position position="482"/>
    </location>
</feature>
<accession>Q50L43</accession>
<accession>A2AQJ1</accession>
<accession>Q3TJC5</accession>
<reference key="1">
    <citation type="journal article" date="2005" name="J. Biol. Chem.">
        <title>Identification of novel cytosolic phospholipase A(2)s, murine cPLA(2)delta, epsilon, and zeta, which form a gene cluster with cPLA(2)beta.</title>
        <authorList>
            <person name="Ohto T."/>
            <person name="Uozumi N."/>
            <person name="Hirabayashi T."/>
            <person name="Shimizu T."/>
        </authorList>
    </citation>
    <scope>NUCLEOTIDE SEQUENCE [MRNA]</scope>
    <scope>FUNCTION</scope>
    <scope>CATALYTIC ACTIVITY</scope>
    <scope>ACTIVITY REGULATION</scope>
    <scope>BIOPHYSICOCHEMICAL PROPERTIES</scope>
    <scope>PATHWAY</scope>
    <scope>SUBCELLULAR LOCATION</scope>
    <scope>TISSUE SPECIFICITY</scope>
    <source>
        <strain>C57BL/6J</strain>
    </source>
</reference>
<reference key="2">
    <citation type="journal article" date="2005" name="Science">
        <title>The transcriptional landscape of the mammalian genome.</title>
        <authorList>
            <person name="Carninci P."/>
            <person name="Kasukawa T."/>
            <person name="Katayama S."/>
            <person name="Gough J."/>
            <person name="Frith M.C."/>
            <person name="Maeda N."/>
            <person name="Oyama R."/>
            <person name="Ravasi T."/>
            <person name="Lenhard B."/>
            <person name="Wells C."/>
            <person name="Kodzius R."/>
            <person name="Shimokawa K."/>
            <person name="Bajic V.B."/>
            <person name="Brenner S.E."/>
            <person name="Batalov S."/>
            <person name="Forrest A.R."/>
            <person name="Zavolan M."/>
            <person name="Davis M.J."/>
            <person name="Wilming L.G."/>
            <person name="Aidinis V."/>
            <person name="Allen J.E."/>
            <person name="Ambesi-Impiombato A."/>
            <person name="Apweiler R."/>
            <person name="Aturaliya R.N."/>
            <person name="Bailey T.L."/>
            <person name="Bansal M."/>
            <person name="Baxter L."/>
            <person name="Beisel K.W."/>
            <person name="Bersano T."/>
            <person name="Bono H."/>
            <person name="Chalk A.M."/>
            <person name="Chiu K.P."/>
            <person name="Choudhary V."/>
            <person name="Christoffels A."/>
            <person name="Clutterbuck D.R."/>
            <person name="Crowe M.L."/>
            <person name="Dalla E."/>
            <person name="Dalrymple B.P."/>
            <person name="de Bono B."/>
            <person name="Della Gatta G."/>
            <person name="di Bernardo D."/>
            <person name="Down T."/>
            <person name="Engstrom P."/>
            <person name="Fagiolini M."/>
            <person name="Faulkner G."/>
            <person name="Fletcher C.F."/>
            <person name="Fukushima T."/>
            <person name="Furuno M."/>
            <person name="Futaki S."/>
            <person name="Gariboldi M."/>
            <person name="Georgii-Hemming P."/>
            <person name="Gingeras T.R."/>
            <person name="Gojobori T."/>
            <person name="Green R.E."/>
            <person name="Gustincich S."/>
            <person name="Harbers M."/>
            <person name="Hayashi Y."/>
            <person name="Hensch T.K."/>
            <person name="Hirokawa N."/>
            <person name="Hill D."/>
            <person name="Huminiecki L."/>
            <person name="Iacono M."/>
            <person name="Ikeo K."/>
            <person name="Iwama A."/>
            <person name="Ishikawa T."/>
            <person name="Jakt M."/>
            <person name="Kanapin A."/>
            <person name="Katoh M."/>
            <person name="Kawasawa Y."/>
            <person name="Kelso J."/>
            <person name="Kitamura H."/>
            <person name="Kitano H."/>
            <person name="Kollias G."/>
            <person name="Krishnan S.P."/>
            <person name="Kruger A."/>
            <person name="Kummerfeld S.K."/>
            <person name="Kurochkin I.V."/>
            <person name="Lareau L.F."/>
            <person name="Lazarevic D."/>
            <person name="Lipovich L."/>
            <person name="Liu J."/>
            <person name="Liuni S."/>
            <person name="McWilliam S."/>
            <person name="Madan Babu M."/>
            <person name="Madera M."/>
            <person name="Marchionni L."/>
            <person name="Matsuda H."/>
            <person name="Matsuzawa S."/>
            <person name="Miki H."/>
            <person name="Mignone F."/>
            <person name="Miyake S."/>
            <person name="Morris K."/>
            <person name="Mottagui-Tabar S."/>
            <person name="Mulder N."/>
            <person name="Nakano N."/>
            <person name="Nakauchi H."/>
            <person name="Ng P."/>
            <person name="Nilsson R."/>
            <person name="Nishiguchi S."/>
            <person name="Nishikawa S."/>
            <person name="Nori F."/>
            <person name="Ohara O."/>
            <person name="Okazaki Y."/>
            <person name="Orlando V."/>
            <person name="Pang K.C."/>
            <person name="Pavan W.J."/>
            <person name="Pavesi G."/>
            <person name="Pesole G."/>
            <person name="Petrovsky N."/>
            <person name="Piazza S."/>
            <person name="Reed J."/>
            <person name="Reid J.F."/>
            <person name="Ring B.Z."/>
            <person name="Ringwald M."/>
            <person name="Rost B."/>
            <person name="Ruan Y."/>
            <person name="Salzberg S.L."/>
            <person name="Sandelin A."/>
            <person name="Schneider C."/>
            <person name="Schoenbach C."/>
            <person name="Sekiguchi K."/>
            <person name="Semple C.A."/>
            <person name="Seno S."/>
            <person name="Sessa L."/>
            <person name="Sheng Y."/>
            <person name="Shibata Y."/>
            <person name="Shimada H."/>
            <person name="Shimada K."/>
            <person name="Silva D."/>
            <person name="Sinclair B."/>
            <person name="Sperling S."/>
            <person name="Stupka E."/>
            <person name="Sugiura K."/>
            <person name="Sultana R."/>
            <person name="Takenaka Y."/>
            <person name="Taki K."/>
            <person name="Tammoja K."/>
            <person name="Tan S.L."/>
            <person name="Tang S."/>
            <person name="Taylor M.S."/>
            <person name="Tegner J."/>
            <person name="Teichmann S.A."/>
            <person name="Ueda H.R."/>
            <person name="van Nimwegen E."/>
            <person name="Verardo R."/>
            <person name="Wei C.L."/>
            <person name="Yagi K."/>
            <person name="Yamanishi H."/>
            <person name="Zabarovsky E."/>
            <person name="Zhu S."/>
            <person name="Zimmer A."/>
            <person name="Hide W."/>
            <person name="Bult C."/>
            <person name="Grimmond S.M."/>
            <person name="Teasdale R.D."/>
            <person name="Liu E.T."/>
            <person name="Brusic V."/>
            <person name="Quackenbush J."/>
            <person name="Wahlestedt C."/>
            <person name="Mattick J.S."/>
            <person name="Hume D.A."/>
            <person name="Kai C."/>
            <person name="Sasaki D."/>
            <person name="Tomaru Y."/>
            <person name="Fukuda S."/>
            <person name="Kanamori-Katayama M."/>
            <person name="Suzuki M."/>
            <person name="Aoki J."/>
            <person name="Arakawa T."/>
            <person name="Iida J."/>
            <person name="Imamura K."/>
            <person name="Itoh M."/>
            <person name="Kato T."/>
            <person name="Kawaji H."/>
            <person name="Kawagashira N."/>
            <person name="Kawashima T."/>
            <person name="Kojima M."/>
            <person name="Kondo S."/>
            <person name="Konno H."/>
            <person name="Nakano K."/>
            <person name="Ninomiya N."/>
            <person name="Nishio T."/>
            <person name="Okada M."/>
            <person name="Plessy C."/>
            <person name="Shibata K."/>
            <person name="Shiraki T."/>
            <person name="Suzuki S."/>
            <person name="Tagami M."/>
            <person name="Waki K."/>
            <person name="Watahiki A."/>
            <person name="Okamura-Oho Y."/>
            <person name="Suzuki H."/>
            <person name="Kawai J."/>
            <person name="Hayashizaki Y."/>
        </authorList>
    </citation>
    <scope>NUCLEOTIDE SEQUENCE [LARGE SCALE MRNA]</scope>
    <source>
        <strain>C57BL/6J</strain>
        <tissue>Placenta</tissue>
    </source>
</reference>
<reference key="3">
    <citation type="journal article" date="2009" name="PLoS Biol.">
        <title>Lineage-specific biology revealed by a finished genome assembly of the mouse.</title>
        <authorList>
            <person name="Church D.M."/>
            <person name="Goodstadt L."/>
            <person name="Hillier L.W."/>
            <person name="Zody M.C."/>
            <person name="Goldstein S."/>
            <person name="She X."/>
            <person name="Bult C.J."/>
            <person name="Agarwala R."/>
            <person name="Cherry J.L."/>
            <person name="DiCuccio M."/>
            <person name="Hlavina W."/>
            <person name="Kapustin Y."/>
            <person name="Meric P."/>
            <person name="Maglott D."/>
            <person name="Birtle Z."/>
            <person name="Marques A.C."/>
            <person name="Graves T."/>
            <person name="Zhou S."/>
            <person name="Teague B."/>
            <person name="Potamousis K."/>
            <person name="Churas C."/>
            <person name="Place M."/>
            <person name="Herschleb J."/>
            <person name="Runnheim R."/>
            <person name="Forrest D."/>
            <person name="Amos-Landgraf J."/>
            <person name="Schwartz D.C."/>
            <person name="Cheng Z."/>
            <person name="Lindblad-Toh K."/>
            <person name="Eichler E.E."/>
            <person name="Ponting C.P."/>
        </authorList>
    </citation>
    <scope>NUCLEOTIDE SEQUENCE [LARGE SCALE GENOMIC DNA]</scope>
    <source>
        <strain>C57BL/6J</strain>
    </source>
</reference>
<gene>
    <name evidence="9" type="primary">Pla2g4d</name>
</gene>
<name>PA24D_MOUSE</name>
<evidence type="ECO:0000250" key="1">
    <source>
        <dbReference type="UniProtKB" id="P47712"/>
    </source>
</evidence>
<evidence type="ECO:0000250" key="2">
    <source>
        <dbReference type="UniProtKB" id="Q86XP0"/>
    </source>
</evidence>
<evidence type="ECO:0000255" key="3">
    <source>
        <dbReference type="PROSITE-ProRule" id="PRU00041"/>
    </source>
</evidence>
<evidence type="ECO:0000255" key="4">
    <source>
        <dbReference type="PROSITE-ProRule" id="PRU00555"/>
    </source>
</evidence>
<evidence type="ECO:0000269" key="5">
    <source>
    </source>
</evidence>
<evidence type="ECO:0000303" key="6">
    <source>
    </source>
</evidence>
<evidence type="ECO:0000305" key="7"/>
<evidence type="ECO:0000305" key="8">
    <source>
    </source>
</evidence>
<evidence type="ECO:0000312" key="9">
    <source>
        <dbReference type="MGI" id="MGI:1925640"/>
    </source>
</evidence>
<comment type="function">
    <text evidence="5">Calcium-dependent phospholipase A2 that selectively hydrolyzes glycerophospholipids in the sn-2 position (PubMed:15866882). Compared to its human ortholog, may have no preference for the fatty acid found at the sn-2 position (PubMed:15866882).</text>
</comment>
<comment type="catalytic activity">
    <reaction evidence="5">
        <text>a 1,2-diacyl-sn-glycero-3-phosphocholine + H2O = a 1-acyl-sn-glycero-3-phosphocholine + a fatty acid + H(+)</text>
        <dbReference type="Rhea" id="RHEA:15801"/>
        <dbReference type="ChEBI" id="CHEBI:15377"/>
        <dbReference type="ChEBI" id="CHEBI:15378"/>
        <dbReference type="ChEBI" id="CHEBI:28868"/>
        <dbReference type="ChEBI" id="CHEBI:57643"/>
        <dbReference type="ChEBI" id="CHEBI:58168"/>
        <dbReference type="EC" id="3.1.1.4"/>
    </reaction>
    <physiologicalReaction direction="left-to-right" evidence="8">
        <dbReference type="Rhea" id="RHEA:15802"/>
    </physiologicalReaction>
</comment>
<comment type="catalytic activity">
    <reaction evidence="5">
        <text>1-hexadecanoyl-2-(5Z,8Z,11Z,14Z-eicosatetraenoyl)-sn-glycero-3-phosphocholine + H2O = 1-hexadecanoyl-sn-glycero-3-phosphocholine + (5Z,8Z,11Z,14Z)-eicosatetraenoate + H(+)</text>
        <dbReference type="Rhea" id="RHEA:40427"/>
        <dbReference type="ChEBI" id="CHEBI:15377"/>
        <dbReference type="ChEBI" id="CHEBI:15378"/>
        <dbReference type="ChEBI" id="CHEBI:32395"/>
        <dbReference type="ChEBI" id="CHEBI:72998"/>
        <dbReference type="ChEBI" id="CHEBI:73003"/>
    </reaction>
    <physiologicalReaction direction="left-to-right" evidence="8">
        <dbReference type="Rhea" id="RHEA:40428"/>
    </physiologicalReaction>
</comment>
<comment type="catalytic activity">
    <reaction evidence="5">
        <text>1-hexadecanoyl-2-(9Z,12Z-octadecadienoyl)-sn-glycero-3-phosphocholine + H2O = (9Z,12Z)-octadecadienoate + 1-hexadecanoyl-sn-glycero-3-phosphocholine + H(+)</text>
        <dbReference type="Rhea" id="RHEA:40811"/>
        <dbReference type="ChEBI" id="CHEBI:15377"/>
        <dbReference type="ChEBI" id="CHEBI:15378"/>
        <dbReference type="ChEBI" id="CHEBI:30245"/>
        <dbReference type="ChEBI" id="CHEBI:72998"/>
        <dbReference type="ChEBI" id="CHEBI:73002"/>
    </reaction>
    <physiologicalReaction direction="left-to-right" evidence="8">
        <dbReference type="Rhea" id="RHEA:40812"/>
    </physiologicalReaction>
</comment>
<comment type="catalytic activity">
    <reaction evidence="2">
        <text>1-hexadecanoyl-2-(9Z-octadecenoyl)-sn-glycero-3-phosphocholine + H2O = 1-hexadecanoyl-sn-glycero-3-phosphocholine + (9Z)-octadecenoate + H(+)</text>
        <dbReference type="Rhea" id="RHEA:38779"/>
        <dbReference type="ChEBI" id="CHEBI:15377"/>
        <dbReference type="ChEBI" id="CHEBI:15378"/>
        <dbReference type="ChEBI" id="CHEBI:30823"/>
        <dbReference type="ChEBI" id="CHEBI:72998"/>
        <dbReference type="ChEBI" id="CHEBI:73001"/>
    </reaction>
    <physiologicalReaction direction="left-to-right" evidence="2">
        <dbReference type="Rhea" id="RHEA:38780"/>
    </physiologicalReaction>
</comment>
<comment type="catalytic activity">
    <reaction evidence="5">
        <text>1-hexadecanoyl-2-(5Z,8Z,11Z,14Z-eicosatetraenoyl)-sn-glycero-3-phosphoethanolamine + H2O = 1-hexadecanoyl-sn-glycero-3-phosphoethanolamine + (5Z,8Z,11Z,14Z)-eicosatetraenoate + H(+)</text>
        <dbReference type="Rhea" id="RHEA:40431"/>
        <dbReference type="ChEBI" id="CHEBI:15377"/>
        <dbReference type="ChEBI" id="CHEBI:15378"/>
        <dbReference type="ChEBI" id="CHEBI:32395"/>
        <dbReference type="ChEBI" id="CHEBI:73004"/>
        <dbReference type="ChEBI" id="CHEBI:73009"/>
    </reaction>
    <physiologicalReaction direction="left-to-right" evidence="8">
        <dbReference type="Rhea" id="RHEA:40432"/>
    </physiologicalReaction>
</comment>
<comment type="catalytic activity">
    <reaction evidence="5">
        <text>1-hexadecanoyl-2-(9Z,12Z-octadecadienoyl)-sn-glycero-3-phosphoethanolamine + H2O = 1-hexadecanoyl-sn-glycero-3-phosphoethanolamine + (9Z,12Z)-octadecadienoate + H(+)</text>
        <dbReference type="Rhea" id="RHEA:40815"/>
        <dbReference type="ChEBI" id="CHEBI:15377"/>
        <dbReference type="ChEBI" id="CHEBI:15378"/>
        <dbReference type="ChEBI" id="CHEBI:30245"/>
        <dbReference type="ChEBI" id="CHEBI:73004"/>
        <dbReference type="ChEBI" id="CHEBI:73008"/>
    </reaction>
    <physiologicalReaction direction="left-to-right" evidence="8">
        <dbReference type="Rhea" id="RHEA:40816"/>
    </physiologicalReaction>
</comment>
<comment type="catalytic activity">
    <reaction evidence="5">
        <text>1-hexadecanoyl-sn-glycero-3-phosphocholine + H2O = sn-glycerol 3-phosphocholine + hexadecanoate + H(+)</text>
        <dbReference type="Rhea" id="RHEA:40435"/>
        <dbReference type="ChEBI" id="CHEBI:7896"/>
        <dbReference type="ChEBI" id="CHEBI:15377"/>
        <dbReference type="ChEBI" id="CHEBI:15378"/>
        <dbReference type="ChEBI" id="CHEBI:16870"/>
        <dbReference type="ChEBI" id="CHEBI:72998"/>
    </reaction>
    <physiologicalReaction direction="left-to-right" evidence="8">
        <dbReference type="Rhea" id="RHEA:40436"/>
    </physiologicalReaction>
</comment>
<comment type="cofactor">
    <cofactor evidence="3">
        <name>Ca(2+)</name>
        <dbReference type="ChEBI" id="CHEBI:29108"/>
    </cofactor>
</comment>
<comment type="activity regulation">
    <text evidence="5">Stimulated by cytosolic Ca(2+).</text>
</comment>
<comment type="biophysicochemical properties">
    <kinetics>
        <Vmax evidence="5">13.4 pmol/min/mg enzyme with 1-hexadecanoyl-2-(5Z,8Z,11Z,14Z-eicosatetraenoyl)-sn-glycero-3-phosphocholine as substrate (at 37 degrees Celsius)</Vmax>
        <Vmax evidence="5">8.1 pmol/min/mg enzyme with 1-hexadecanoyl-2-(9Z,12Z-octadecadienoyl)-sn-glycero-3-phosphocholine as substrate (at 37 degrees Celsius)</Vmax>
        <Vmax evidence="5">14.5 pmol/min/mg enzyme with 1-hexadecanoyl-2-(5Z,8Z,11Z,14Z-eicosatetraenoyl)-sn-glycero-3-phosphoethanolamine as substrate (at 37 degrees Celsius)</Vmax>
        <Vmax evidence="5">19.9 pmol/min/mg enzyme with 1-hexadecanoyl-2-(9Z,12Z-octadecadienoyl)-sn-glycero-3-phosphoethanolamine as substrate (at 37 degrees Celsius)</Vmax>
        <Vmax evidence="5">16.4 pmol/min/mg enzyme with 1-hexadecanoyl-sn-glycero-3-phosphocholine as substrate (at 37 degrees Celsius)</Vmax>
    </kinetics>
</comment>
<comment type="pathway">
    <text evidence="5">Lipid metabolism; fatty acid metabolism.</text>
</comment>
<comment type="subcellular location">
    <subcellularLocation>
        <location evidence="5">Cytoplasm</location>
        <location evidence="5">Cytosol</location>
    </subcellularLocation>
    <subcellularLocation>
        <location evidence="8">Membrane</location>
        <topology evidence="8">Peripheral membrane protein</topology>
        <orientation evidence="8">Cytoplasmic side</orientation>
    </subcellularLocation>
    <text evidence="5">Translocates to perinuclear membranes that may correspond to endoplasmic reticulum or Golgi in a calcium-dependent fashion.</text>
</comment>
<comment type="tissue specificity">
    <text evidence="5">Weakly or not expressed in most tissues. Detected in placenta of 17.5 dpc embryos.</text>
</comment>
<comment type="domain">
    <text evidence="2">The N-terminal C2 domain mediates the association with lipid membranes upon calcium binding. An additional second C2 domain may stand in between the C2 domain and the PLA2c domain.</text>
</comment>
<dbReference type="EC" id="3.1.1.4" evidence="5"/>
<dbReference type="EMBL" id="AB195276">
    <property type="protein sequence ID" value="BAD98152.1"/>
    <property type="molecule type" value="mRNA"/>
</dbReference>
<dbReference type="EMBL" id="AK167492">
    <property type="protein sequence ID" value="BAE39570.1"/>
    <property type="molecule type" value="mRNA"/>
</dbReference>
<dbReference type="EMBL" id="AK145985">
    <property type="protein sequence ID" value="BAE26807.1"/>
    <property type="molecule type" value="mRNA"/>
</dbReference>
<dbReference type="EMBL" id="AL844608">
    <property type="status" value="NOT_ANNOTATED_CDS"/>
    <property type="molecule type" value="Genomic_DNA"/>
</dbReference>
<dbReference type="CCDS" id="CCDS16617.1"/>
<dbReference type="RefSeq" id="NP_001019308.1">
    <property type="nucleotide sequence ID" value="NM_001024137.1"/>
</dbReference>
<dbReference type="SMR" id="Q50L43"/>
<dbReference type="FunCoup" id="Q50L43">
    <property type="interactions" value="859"/>
</dbReference>
<dbReference type="STRING" id="10090.ENSMUSP00000092252"/>
<dbReference type="GlyGen" id="Q50L43">
    <property type="glycosylation" value="1 site"/>
</dbReference>
<dbReference type="iPTMnet" id="Q50L43"/>
<dbReference type="PhosphoSitePlus" id="Q50L43"/>
<dbReference type="PaxDb" id="10090-ENSMUSP00000092252"/>
<dbReference type="ProteomicsDB" id="294370"/>
<dbReference type="Antibodypedia" id="23488">
    <property type="antibodies" value="83 antibodies from 24 providers"/>
</dbReference>
<dbReference type="DNASU" id="78390"/>
<dbReference type="Ensembl" id="ENSMUST00000094665.5">
    <property type="protein sequence ID" value="ENSMUSP00000092252.5"/>
    <property type="gene ID" value="ENSMUSG00000070719.5"/>
</dbReference>
<dbReference type="GeneID" id="78390"/>
<dbReference type="KEGG" id="mmu:78390"/>
<dbReference type="UCSC" id="uc008lvh.1">
    <property type="organism name" value="mouse"/>
</dbReference>
<dbReference type="AGR" id="MGI:1925640"/>
<dbReference type="CTD" id="283748"/>
<dbReference type="MGI" id="MGI:1925640">
    <property type="gene designation" value="Pla2g4d"/>
</dbReference>
<dbReference type="VEuPathDB" id="HostDB:ENSMUSG00000070719"/>
<dbReference type="eggNOG" id="KOG1028">
    <property type="taxonomic scope" value="Eukaryota"/>
</dbReference>
<dbReference type="eggNOG" id="KOG1325">
    <property type="taxonomic scope" value="Eukaryota"/>
</dbReference>
<dbReference type="GeneTree" id="ENSGT01030000234606"/>
<dbReference type="HOGENOM" id="CLU_011663_0_0_1"/>
<dbReference type="InParanoid" id="Q50L43"/>
<dbReference type="OMA" id="ACWRLTV"/>
<dbReference type="OrthoDB" id="270970at2759"/>
<dbReference type="PhylomeDB" id="Q50L43"/>
<dbReference type="TreeFam" id="TF325228"/>
<dbReference type="Reactome" id="R-MMU-1482788">
    <property type="pathway name" value="Acyl chain remodelling of PC"/>
</dbReference>
<dbReference type="Reactome" id="R-MMU-1482801">
    <property type="pathway name" value="Acyl chain remodelling of PS"/>
</dbReference>
<dbReference type="Reactome" id="R-MMU-1482839">
    <property type="pathway name" value="Acyl chain remodelling of PE"/>
</dbReference>
<dbReference type="Reactome" id="R-MMU-1482922">
    <property type="pathway name" value="Acyl chain remodelling of PI"/>
</dbReference>
<dbReference type="Reactome" id="R-MMU-1482925">
    <property type="pathway name" value="Acyl chain remodelling of PG"/>
</dbReference>
<dbReference type="Reactome" id="R-MMU-1483115">
    <property type="pathway name" value="Hydrolysis of LPC"/>
</dbReference>
<dbReference type="Reactome" id="R-MMU-1483166">
    <property type="pathway name" value="Synthesis of PA"/>
</dbReference>
<dbReference type="UniPathway" id="UPA00199"/>
<dbReference type="BioGRID-ORCS" id="78390">
    <property type="hits" value="3 hits in 78 CRISPR screens"/>
</dbReference>
<dbReference type="PRO" id="PR:Q50L43"/>
<dbReference type="Proteomes" id="UP000000589">
    <property type="component" value="Chromosome 2"/>
</dbReference>
<dbReference type="RNAct" id="Q50L43">
    <property type="molecule type" value="protein"/>
</dbReference>
<dbReference type="Bgee" id="ENSMUSG00000070719">
    <property type="expression patterns" value="Expressed in esophagus and 26 other cell types or tissues"/>
</dbReference>
<dbReference type="GO" id="GO:0005737">
    <property type="term" value="C:cytoplasm"/>
    <property type="evidence" value="ECO:0000314"/>
    <property type="project" value="MGI"/>
</dbReference>
<dbReference type="GO" id="GO:0005829">
    <property type="term" value="C:cytosol"/>
    <property type="evidence" value="ECO:0007669"/>
    <property type="project" value="UniProtKB-SubCell"/>
</dbReference>
<dbReference type="GO" id="GO:0016020">
    <property type="term" value="C:membrane"/>
    <property type="evidence" value="ECO:0007669"/>
    <property type="project" value="UniProtKB-SubCell"/>
</dbReference>
<dbReference type="GO" id="GO:0005509">
    <property type="term" value="F:calcium ion binding"/>
    <property type="evidence" value="ECO:0007669"/>
    <property type="project" value="InterPro"/>
</dbReference>
<dbReference type="GO" id="GO:0047498">
    <property type="term" value="F:calcium-dependent phospholipase A2 activity"/>
    <property type="evidence" value="ECO:0000250"/>
    <property type="project" value="UniProtKB"/>
</dbReference>
<dbReference type="GO" id="GO:0004623">
    <property type="term" value="F:phospholipase A2 activity"/>
    <property type="evidence" value="ECO:0000314"/>
    <property type="project" value="MGI"/>
</dbReference>
<dbReference type="GO" id="GO:0006631">
    <property type="term" value="P:fatty acid metabolic process"/>
    <property type="evidence" value="ECO:0007669"/>
    <property type="project" value="UniProtKB-UniPathway"/>
</dbReference>
<dbReference type="GO" id="GO:0046475">
    <property type="term" value="P:glycerophospholipid catabolic process"/>
    <property type="evidence" value="ECO:0000250"/>
    <property type="project" value="UniProtKB"/>
</dbReference>
<dbReference type="CDD" id="cd04036">
    <property type="entry name" value="C2_cPLA2"/>
    <property type="match status" value="1"/>
</dbReference>
<dbReference type="FunFam" id="2.60.40.150:FF:000030">
    <property type="entry name" value="Phospholipase A2"/>
    <property type="match status" value="1"/>
</dbReference>
<dbReference type="FunFam" id="3.40.1090.10:FF:000002">
    <property type="entry name" value="Phospholipase A2"/>
    <property type="match status" value="1"/>
</dbReference>
<dbReference type="Gene3D" id="2.60.40.150">
    <property type="entry name" value="C2 domain"/>
    <property type="match status" value="1"/>
</dbReference>
<dbReference type="Gene3D" id="3.40.1090.10">
    <property type="entry name" value="Cytosolic phospholipase A2 catalytic domain"/>
    <property type="match status" value="1"/>
</dbReference>
<dbReference type="InterPro" id="IPR016035">
    <property type="entry name" value="Acyl_Trfase/lysoPLipase"/>
</dbReference>
<dbReference type="InterPro" id="IPR041847">
    <property type="entry name" value="C2_cPLA2"/>
</dbReference>
<dbReference type="InterPro" id="IPR000008">
    <property type="entry name" value="C2_dom"/>
</dbReference>
<dbReference type="InterPro" id="IPR035892">
    <property type="entry name" value="C2_domain_sf"/>
</dbReference>
<dbReference type="InterPro" id="IPR040723">
    <property type="entry name" value="cPLA2_C2"/>
</dbReference>
<dbReference type="InterPro" id="IPR002642">
    <property type="entry name" value="LysoPLipase_cat_dom"/>
</dbReference>
<dbReference type="PANTHER" id="PTHR10728">
    <property type="entry name" value="CYTOSOLIC PHOSPHOLIPASE A2"/>
    <property type="match status" value="1"/>
</dbReference>
<dbReference type="PANTHER" id="PTHR10728:SF31">
    <property type="entry name" value="CYTOSOLIC PHOSPHOLIPASE A2 DELTA"/>
    <property type="match status" value="1"/>
</dbReference>
<dbReference type="Pfam" id="PF00168">
    <property type="entry name" value="C2"/>
    <property type="match status" value="1"/>
</dbReference>
<dbReference type="Pfam" id="PF18695">
    <property type="entry name" value="cPLA2_C2"/>
    <property type="match status" value="1"/>
</dbReference>
<dbReference type="Pfam" id="PF01735">
    <property type="entry name" value="PLA2_B"/>
    <property type="match status" value="1"/>
</dbReference>
<dbReference type="SMART" id="SM00239">
    <property type="entry name" value="C2"/>
    <property type="match status" value="1"/>
</dbReference>
<dbReference type="SMART" id="SM00022">
    <property type="entry name" value="PLAc"/>
    <property type="match status" value="1"/>
</dbReference>
<dbReference type="SUPFAM" id="SSF49562">
    <property type="entry name" value="C2 domain (Calcium/lipid-binding domain, CaLB)"/>
    <property type="match status" value="1"/>
</dbReference>
<dbReference type="SUPFAM" id="SSF52151">
    <property type="entry name" value="FabD/lysophospholipase-like"/>
    <property type="match status" value="1"/>
</dbReference>
<dbReference type="PROSITE" id="PS50004">
    <property type="entry name" value="C2"/>
    <property type="match status" value="1"/>
</dbReference>
<dbReference type="PROSITE" id="PS51210">
    <property type="entry name" value="PLA2C"/>
    <property type="match status" value="1"/>
</dbReference>
<organism>
    <name type="scientific">Mus musculus</name>
    <name type="common">Mouse</name>
    <dbReference type="NCBI Taxonomy" id="10090"/>
    <lineage>
        <taxon>Eukaryota</taxon>
        <taxon>Metazoa</taxon>
        <taxon>Chordata</taxon>
        <taxon>Craniata</taxon>
        <taxon>Vertebrata</taxon>
        <taxon>Euteleostomi</taxon>
        <taxon>Mammalia</taxon>
        <taxon>Eutheria</taxon>
        <taxon>Euarchontoglires</taxon>
        <taxon>Glires</taxon>
        <taxon>Rodentia</taxon>
        <taxon>Myomorpha</taxon>
        <taxon>Muroidea</taxon>
        <taxon>Muridae</taxon>
        <taxon>Murinae</taxon>
        <taxon>Mus</taxon>
        <taxon>Mus</taxon>
    </lineage>
</organism>
<protein>
    <recommendedName>
        <fullName evidence="7">Cytosolic phospholipase A2 delta</fullName>
        <shortName evidence="6">cPLA2-delta</shortName>
        <ecNumber evidence="5">3.1.1.4</ecNumber>
    </recommendedName>
    <alternativeName>
        <fullName>Phospholipase A2 group IVD</fullName>
    </alternativeName>
</protein>
<keyword id="KW-0106">Calcium</keyword>
<keyword id="KW-0963">Cytoplasm</keyword>
<keyword id="KW-0378">Hydrolase</keyword>
<keyword id="KW-0442">Lipid degradation</keyword>
<keyword id="KW-0443">Lipid metabolism</keyword>
<keyword id="KW-0472">Membrane</keyword>
<keyword id="KW-0479">Metal-binding</keyword>
<keyword id="KW-1185">Reference proteome</keyword>
<sequence length="825" mass="93042">MWSGDRRVGMESLSPERLHGHPYQEEASVFCRLTVKILEARSLPRADLLSQADPYVTVQLPTASGMKFKTQTVTNSSHPVWNETFSFLIQSQVKNILELTIYDEDVITKDDICFKVSYDVSEILPGQLLQKTFSLNPQGPEELDVELLMERTWDPPENLITNNVLVARELSHLDVSLDRAGNTAMAAGQDKLELELMLKGSYEDTQTFFPDTAFTFSFHYMRGQDTELNGYLRGPRNSGWNSDTSVTPFNVPLMSLAAGKEMTIDIPAMKAPEGKLQLKTDCCPKELSVRLSYGLCPEEQAFLSRRKKVVAAALKQALQLDEDLNEDEVPVVGINAEGGGMRAMISLYGHLLALQKLGLLDCVTYFSGISGSTWTMAHLYRDPEWSQRDLEGPISHAREHVAKTLLKEFLPEHLASYRQTLKLREEQGYTVTVADLWGLVLESKLHGQVTDQKLSGQRAALERGQNPLPLYLSLNVKENHLETLHFKEWVEFSPYEVGFLKYGGFVPSELFGSEFFMGRLMKRLPESQICFLEGIWSNLFSVNLMDIWYDITYGKDSNNFPVDVRNSEKEFSGSAGTSSGVEAPWLESGTALAQALKGFLTGRPFHQRSANFLHGLQLHRDYCNQRHFSTWADCNLDDTPNQLTPQDPQLCLIDAGCFMNSSCPSLFRPGRQVDLIISFNYNQSLPFKGLQQSEKYSRARGLPFPRVEPSPEDHSQPQECYLFSDPTCPEAPVVLHFPLVNDSFRDHSAPGVRRSPDELKAGQVNLTGAASPYFMYNMTYKNEDFDRLLQLSDYNVQNNQGTILQALRTVLKRRASETRPLGVKT</sequence>
<proteinExistence type="evidence at protein level"/>